<keyword id="KW-0067">ATP-binding</keyword>
<keyword id="KW-0227">DNA damage</keyword>
<keyword id="KW-0234">DNA repair</keyword>
<keyword id="KW-0238">DNA-binding</keyword>
<keyword id="KW-0547">Nucleotide-binding</keyword>
<keyword id="KW-0539">Nucleus</keyword>
<keyword id="KW-1185">Reference proteome</keyword>
<reference key="1">
    <citation type="journal article" date="2005" name="Nature">
        <title>Genomic sequence of the pathogenic and allergenic filamentous fungus Aspergillus fumigatus.</title>
        <authorList>
            <person name="Nierman W.C."/>
            <person name="Pain A."/>
            <person name="Anderson M.J."/>
            <person name="Wortman J.R."/>
            <person name="Kim H.S."/>
            <person name="Arroyo J."/>
            <person name="Berriman M."/>
            <person name="Abe K."/>
            <person name="Archer D.B."/>
            <person name="Bermejo C."/>
            <person name="Bennett J.W."/>
            <person name="Bowyer P."/>
            <person name="Chen D."/>
            <person name="Collins M."/>
            <person name="Coulsen R."/>
            <person name="Davies R."/>
            <person name="Dyer P.S."/>
            <person name="Farman M.L."/>
            <person name="Fedorova N."/>
            <person name="Fedorova N.D."/>
            <person name="Feldblyum T.V."/>
            <person name="Fischer R."/>
            <person name="Fosker N."/>
            <person name="Fraser A."/>
            <person name="Garcia J.L."/>
            <person name="Garcia M.J."/>
            <person name="Goble A."/>
            <person name="Goldman G.H."/>
            <person name="Gomi K."/>
            <person name="Griffith-Jones S."/>
            <person name="Gwilliam R."/>
            <person name="Haas B.J."/>
            <person name="Haas H."/>
            <person name="Harris D.E."/>
            <person name="Horiuchi H."/>
            <person name="Huang J."/>
            <person name="Humphray S."/>
            <person name="Jimenez J."/>
            <person name="Keller N."/>
            <person name="Khouri H."/>
            <person name="Kitamoto K."/>
            <person name="Kobayashi T."/>
            <person name="Konzack S."/>
            <person name="Kulkarni R."/>
            <person name="Kumagai T."/>
            <person name="Lafton A."/>
            <person name="Latge J.-P."/>
            <person name="Li W."/>
            <person name="Lord A."/>
            <person name="Lu C."/>
            <person name="Majoros W.H."/>
            <person name="May G.S."/>
            <person name="Miller B.L."/>
            <person name="Mohamoud Y."/>
            <person name="Molina M."/>
            <person name="Monod M."/>
            <person name="Mouyna I."/>
            <person name="Mulligan S."/>
            <person name="Murphy L.D."/>
            <person name="O'Neil S."/>
            <person name="Paulsen I."/>
            <person name="Penalva M.A."/>
            <person name="Pertea M."/>
            <person name="Price C."/>
            <person name="Pritchard B.L."/>
            <person name="Quail M.A."/>
            <person name="Rabbinowitsch E."/>
            <person name="Rawlins N."/>
            <person name="Rajandream M.A."/>
            <person name="Reichard U."/>
            <person name="Renauld H."/>
            <person name="Robson G.D."/>
            <person name="Rodriguez de Cordoba S."/>
            <person name="Rodriguez-Pena J.M."/>
            <person name="Ronning C.M."/>
            <person name="Rutter S."/>
            <person name="Salzberg S.L."/>
            <person name="Sanchez M."/>
            <person name="Sanchez-Ferrero J.C."/>
            <person name="Saunders D."/>
            <person name="Seeger K."/>
            <person name="Squares R."/>
            <person name="Squares S."/>
            <person name="Takeuchi M."/>
            <person name="Tekaia F."/>
            <person name="Turner G."/>
            <person name="Vazquez de Aldana C.R."/>
            <person name="Weidman J."/>
            <person name="White O."/>
            <person name="Woodward J.R."/>
            <person name="Yu J.-H."/>
            <person name="Fraser C.M."/>
            <person name="Galagan J.E."/>
            <person name="Asai K."/>
            <person name="Machida M."/>
            <person name="Hall N."/>
            <person name="Barrell B.G."/>
            <person name="Denning D.W."/>
        </authorList>
    </citation>
    <scope>NUCLEOTIDE SEQUENCE [LARGE SCALE GENOMIC DNA]</scope>
    <source>
        <strain>ATCC MYA-4609 / CBS 101355 / FGSC A1100 / Af293</strain>
    </source>
</reference>
<protein>
    <recommendedName>
        <fullName>DNA mismatch repair protein msh3</fullName>
    </recommendedName>
    <alternativeName>
        <fullName>MutS protein homolog 3</fullName>
    </alternativeName>
</protein>
<dbReference type="EMBL" id="AAHF01000009">
    <property type="protein sequence ID" value="EAL87024.1"/>
    <property type="molecule type" value="Genomic_DNA"/>
</dbReference>
<dbReference type="RefSeq" id="XP_749062.1">
    <property type="nucleotide sequence ID" value="XM_743969.1"/>
</dbReference>
<dbReference type="SMR" id="Q4WGB7"/>
<dbReference type="FunCoup" id="Q4WGB7">
    <property type="interactions" value="778"/>
</dbReference>
<dbReference type="STRING" id="330879.Q4WGB7"/>
<dbReference type="EnsemblFungi" id="EAL87024">
    <property type="protein sequence ID" value="EAL87024"/>
    <property type="gene ID" value="AFUA_7G04480"/>
</dbReference>
<dbReference type="GeneID" id="3506462"/>
<dbReference type="KEGG" id="afm:AFUA_7G04480"/>
<dbReference type="VEuPathDB" id="FungiDB:Afu7g04480"/>
<dbReference type="eggNOG" id="KOG0218">
    <property type="taxonomic scope" value="Eukaryota"/>
</dbReference>
<dbReference type="HOGENOM" id="CLU_002472_0_0_1"/>
<dbReference type="InParanoid" id="Q4WGB7"/>
<dbReference type="OMA" id="INMHAAR"/>
<dbReference type="OrthoDB" id="121051at2759"/>
<dbReference type="Proteomes" id="UP000002530">
    <property type="component" value="Chromosome 7"/>
</dbReference>
<dbReference type="GO" id="GO:0005634">
    <property type="term" value="C:nucleus"/>
    <property type="evidence" value="ECO:0000318"/>
    <property type="project" value="GO_Central"/>
</dbReference>
<dbReference type="GO" id="GO:0005524">
    <property type="term" value="F:ATP binding"/>
    <property type="evidence" value="ECO:0007669"/>
    <property type="project" value="UniProtKB-KW"/>
</dbReference>
<dbReference type="GO" id="GO:0140664">
    <property type="term" value="F:ATP-dependent DNA damage sensor activity"/>
    <property type="evidence" value="ECO:0007669"/>
    <property type="project" value="InterPro"/>
</dbReference>
<dbReference type="GO" id="GO:0003690">
    <property type="term" value="F:double-stranded DNA binding"/>
    <property type="evidence" value="ECO:0000318"/>
    <property type="project" value="GO_Central"/>
</dbReference>
<dbReference type="GO" id="GO:0030983">
    <property type="term" value="F:mismatched DNA binding"/>
    <property type="evidence" value="ECO:0007669"/>
    <property type="project" value="InterPro"/>
</dbReference>
<dbReference type="GO" id="GO:0006298">
    <property type="term" value="P:mismatch repair"/>
    <property type="evidence" value="ECO:0000318"/>
    <property type="project" value="GO_Central"/>
</dbReference>
<dbReference type="GO" id="GO:0006312">
    <property type="term" value="P:mitotic recombination"/>
    <property type="evidence" value="ECO:0000318"/>
    <property type="project" value="GO_Central"/>
</dbReference>
<dbReference type="FunFam" id="3.30.420.110:FF:000008">
    <property type="entry name" value="DNA mismatch repair protein"/>
    <property type="match status" value="1"/>
</dbReference>
<dbReference type="FunFam" id="3.40.1170.10:FF:000006">
    <property type="entry name" value="DNA mismatch repair protein"/>
    <property type="match status" value="1"/>
</dbReference>
<dbReference type="FunFam" id="1.10.1420.10:FF:000004">
    <property type="entry name" value="DNA mismatch repair protein Msh3"/>
    <property type="match status" value="1"/>
</dbReference>
<dbReference type="FunFam" id="3.40.50.300:FF:001909">
    <property type="entry name" value="DNA mismatch repair protein msh3"/>
    <property type="match status" value="1"/>
</dbReference>
<dbReference type="Gene3D" id="1.10.1420.10">
    <property type="match status" value="2"/>
</dbReference>
<dbReference type="Gene3D" id="3.40.1170.10">
    <property type="entry name" value="DNA repair protein MutS, domain I"/>
    <property type="match status" value="1"/>
</dbReference>
<dbReference type="Gene3D" id="3.30.420.110">
    <property type="entry name" value="MutS, connector domain"/>
    <property type="match status" value="1"/>
</dbReference>
<dbReference type="Gene3D" id="3.40.50.300">
    <property type="entry name" value="P-loop containing nucleotide triphosphate hydrolases"/>
    <property type="match status" value="1"/>
</dbReference>
<dbReference type="InterPro" id="IPR007695">
    <property type="entry name" value="DNA_mismatch_repair_MutS-lik_N"/>
</dbReference>
<dbReference type="InterPro" id="IPR017261">
    <property type="entry name" value="DNA_mismatch_repair_MutS/MSH"/>
</dbReference>
<dbReference type="InterPro" id="IPR000432">
    <property type="entry name" value="DNA_mismatch_repair_MutS_C"/>
</dbReference>
<dbReference type="InterPro" id="IPR007696">
    <property type="entry name" value="DNA_mismatch_repair_MutS_core"/>
</dbReference>
<dbReference type="InterPro" id="IPR016151">
    <property type="entry name" value="DNA_mismatch_repair_MutS_N"/>
</dbReference>
<dbReference type="InterPro" id="IPR036187">
    <property type="entry name" value="DNA_mismatch_repair_MutS_sf"/>
</dbReference>
<dbReference type="InterPro" id="IPR007860">
    <property type="entry name" value="DNA_mmatch_repair_MutS_con_dom"/>
</dbReference>
<dbReference type="InterPro" id="IPR045076">
    <property type="entry name" value="MutS"/>
</dbReference>
<dbReference type="InterPro" id="IPR036678">
    <property type="entry name" value="MutS_con_dom_sf"/>
</dbReference>
<dbReference type="InterPro" id="IPR027417">
    <property type="entry name" value="P-loop_NTPase"/>
</dbReference>
<dbReference type="NCBIfam" id="NF003810">
    <property type="entry name" value="PRK05399.1"/>
    <property type="match status" value="1"/>
</dbReference>
<dbReference type="PANTHER" id="PTHR11361:SF122">
    <property type="entry name" value="DNA MISMATCH REPAIR PROTEIN MSH3"/>
    <property type="match status" value="1"/>
</dbReference>
<dbReference type="PANTHER" id="PTHR11361">
    <property type="entry name" value="DNA MISMATCH REPAIR PROTEIN MUTS FAMILY MEMBER"/>
    <property type="match status" value="1"/>
</dbReference>
<dbReference type="Pfam" id="PF01624">
    <property type="entry name" value="MutS_I"/>
    <property type="match status" value="1"/>
</dbReference>
<dbReference type="Pfam" id="PF05188">
    <property type="entry name" value="MutS_II"/>
    <property type="match status" value="1"/>
</dbReference>
<dbReference type="Pfam" id="PF05192">
    <property type="entry name" value="MutS_III"/>
    <property type="match status" value="1"/>
</dbReference>
<dbReference type="Pfam" id="PF00488">
    <property type="entry name" value="MutS_V"/>
    <property type="match status" value="1"/>
</dbReference>
<dbReference type="PIRSF" id="PIRSF037677">
    <property type="entry name" value="DNA_mis_repair_Msh6"/>
    <property type="match status" value="1"/>
</dbReference>
<dbReference type="SMART" id="SM00534">
    <property type="entry name" value="MUTSac"/>
    <property type="match status" value="1"/>
</dbReference>
<dbReference type="SMART" id="SM00533">
    <property type="entry name" value="MUTSd"/>
    <property type="match status" value="1"/>
</dbReference>
<dbReference type="SUPFAM" id="SSF55271">
    <property type="entry name" value="DNA repair protein MutS, domain I"/>
    <property type="match status" value="1"/>
</dbReference>
<dbReference type="SUPFAM" id="SSF48334">
    <property type="entry name" value="DNA repair protein MutS, domain III"/>
    <property type="match status" value="1"/>
</dbReference>
<dbReference type="SUPFAM" id="SSF52540">
    <property type="entry name" value="P-loop containing nucleoside triphosphate hydrolases"/>
    <property type="match status" value="1"/>
</dbReference>
<dbReference type="PROSITE" id="PS00486">
    <property type="entry name" value="DNA_MISMATCH_REPAIR_2"/>
    <property type="match status" value="1"/>
</dbReference>
<name>MSH3_ASPFU</name>
<sequence length="1123" mass="124367">MTLSSSQSSPPSTQNLKRKQQTISSFFTKRAPSAEKRSNDIEDGRATTQKGAEMPLRETAGDQNNLEDDEDGDVVVRAPKRVKTNGVDPENGFGRNIKEASNIARRPDPPLSSSQRTNLYKFASSQADDAGIEKTDDPEARQRQLEREKLHKLFVKKLGGADCLIGIGRDATTEAPSGTEDVAEGDEDDESPPQPRSKGKGLSKKGGSKLTPLEKQVIEIKRKHMDTILVVEVGYKFRFFGEDARIAAKELSIVCIPGKMRFDEHPSEAHLDRFASASIPVHRLHVHVKRLVSAGYKVGVVRQLETAALKAAGDNRNAPFSRKLTNLYTKGTYVDDVEGLDGATPAASGGASPATGYMLCITETNAKGWGNDEKVHVGIVAVQPNTGDVIYDDFDDGFMRSEVETRLLHIAPCELVIVGELSKATEKLVQHLSGSKLNTFGDKVRVDRVAKKKTAVAESHSHVANFYAAKLKAANTADDAPASNLLQKVLNLPEQVTVCLSAMIQHLTEYGLEHIFELTKYFQHFSSRSHMLLNANTLVSLEIYQNQTDHSAKGSLFWTLDRTQTRFGQRLLRKWVGRPLLDKERLEERVNAVEELKSPERTVQAERLKIMLGKIKSDLEKNLIRIYYGKCTRPELLTVLQTLQTIAQEYVDVKTPQDSGFTSPILGEAIARVPSILGDVVKFLNKINMHAARNDDKYEFFRESEETEGISEHKCGIASVEHELEEHRSVAAGILKWPKVTYVTSSGIEYLIEVENSAAAIKRVPASWVKVSGTKKVSRFHTPEVIQLLRQRDQHKEALAAACDQAFAALLAEIASNYQSFRDCVQSLATLDCLLSLAAIASQPGYVKPEYTDQTCIHVEQGRHPMVEQLLLDSYVPNDIDLDSDKTRALLVTGPNMGGKSSYVRQIALIAIMAQIGSYVPARSAKLGMLDAVFTRMGAFDNMLAGESTFMVELSETADILKQATPRSLVILDELGRGTSTHDGVAIAQAVLDYMVRTIRSLTLFITHYQHLSNMAQSFPDHELRNVHMRFTESGSGKDEEITFLYEVGEGVAHRSYGLNVARLANLPAPLLEVARQKSSELEERIRRRRLARLLADVGGLIEDPAKGDENFFQRLISNAEQL</sequence>
<comment type="function">
    <text evidence="1">Component of the post-replicative DNA mismatch repair system (MMR). Heterodimerizes with msh2 to form MutS beta, which binds to DNA mismatches thereby initiating DNA repair. Msh3 provides substrate-binding and substrate specificity to the complex. When bound, the MutS beta heterodimer bends the DNA helix and shields approximately 20 base pairs. Acts mainly to repair insertion-deletion loops (IDLs) from 2 to 13 nucleotides in size, but can also repair base-base and single insertion-deletion mismatches that occur during replication. After mismatch binding, forms a ternary complex with the MutL alpha heterodimer, which is thought to be responsible for directing the downstream MMR events, including strand discrimination, excision, and resynthesis. ATP binding and hydrolysis play a pivotal role in mismatch repair functions (By similarity).</text>
</comment>
<comment type="subunit">
    <text evidence="1">Heterodimer consisting of msh2-msh3 (MutS beta). Forms a ternary complex with MutL alpha (mlh1-pms1) (By similarity).</text>
</comment>
<comment type="subcellular location">
    <subcellularLocation>
        <location evidence="1">Nucleus</location>
    </subcellularLocation>
</comment>
<comment type="similarity">
    <text evidence="4">Belongs to the DNA mismatch repair MutS family. MSH3 subfamily.</text>
</comment>
<organism>
    <name type="scientific">Aspergillus fumigatus (strain ATCC MYA-4609 / CBS 101355 / FGSC A1100 / Af293)</name>
    <name type="common">Neosartorya fumigata</name>
    <dbReference type="NCBI Taxonomy" id="330879"/>
    <lineage>
        <taxon>Eukaryota</taxon>
        <taxon>Fungi</taxon>
        <taxon>Dikarya</taxon>
        <taxon>Ascomycota</taxon>
        <taxon>Pezizomycotina</taxon>
        <taxon>Eurotiomycetes</taxon>
        <taxon>Eurotiomycetidae</taxon>
        <taxon>Eurotiales</taxon>
        <taxon>Aspergillaceae</taxon>
        <taxon>Aspergillus</taxon>
        <taxon>Aspergillus subgen. Fumigati</taxon>
    </lineage>
</organism>
<evidence type="ECO:0000250" key="1"/>
<evidence type="ECO:0000255" key="2"/>
<evidence type="ECO:0000256" key="3">
    <source>
        <dbReference type="SAM" id="MobiDB-lite"/>
    </source>
</evidence>
<evidence type="ECO:0000305" key="4"/>
<feature type="chain" id="PRO_0000338509" description="DNA mismatch repair protein msh3">
    <location>
        <begin position="1"/>
        <end position="1123"/>
    </location>
</feature>
<feature type="region of interest" description="Disordered" evidence="3">
    <location>
        <begin position="1"/>
        <end position="117"/>
    </location>
</feature>
<feature type="region of interest" description="Disordered" evidence="3">
    <location>
        <begin position="169"/>
        <end position="208"/>
    </location>
</feature>
<feature type="region of interest" description="Mispair-binding domain" evidence="1">
    <location>
        <begin position="204"/>
        <end position="331"/>
    </location>
</feature>
<feature type="compositionally biased region" description="Low complexity" evidence="3">
    <location>
        <begin position="1"/>
        <end position="12"/>
    </location>
</feature>
<feature type="compositionally biased region" description="Basic and acidic residues" evidence="3">
    <location>
        <begin position="32"/>
        <end position="45"/>
    </location>
</feature>
<feature type="compositionally biased region" description="Acidic residues" evidence="3">
    <location>
        <begin position="181"/>
        <end position="191"/>
    </location>
</feature>
<feature type="compositionally biased region" description="Basic residues" evidence="3">
    <location>
        <begin position="197"/>
        <end position="207"/>
    </location>
</feature>
<feature type="binding site" evidence="2">
    <location>
        <begin position="894"/>
        <end position="901"/>
    </location>
    <ligand>
        <name>ATP</name>
        <dbReference type="ChEBI" id="CHEBI:30616"/>
    </ligand>
</feature>
<proteinExistence type="inferred from homology"/>
<accession>Q4WGB7</accession>
<gene>
    <name type="primary">msh3</name>
    <name type="ORF">AFUA_7G04480</name>
</gene>